<organism>
    <name type="scientific">Methanoculleus marisnigri (strain ATCC 35101 / DSM 1498 / JR1)</name>
    <dbReference type="NCBI Taxonomy" id="368407"/>
    <lineage>
        <taxon>Archaea</taxon>
        <taxon>Methanobacteriati</taxon>
        <taxon>Methanobacteriota</taxon>
        <taxon>Stenosarchaea group</taxon>
        <taxon>Methanomicrobia</taxon>
        <taxon>Methanomicrobiales</taxon>
        <taxon>Methanomicrobiaceae</taxon>
        <taxon>Methanoculleus</taxon>
    </lineage>
</organism>
<accession>A3CU85</accession>
<sequence length="166" mass="18053">MIPAYVPNSAAALFGGGTPIDLGRTFSDGRRVFGDGKTYRGFFGGVVSGVLVGLIEIWAATAFSLSALPQQTFLSVTLLATGALLGDLAKSFLKRRLGKDRGESWFLADQYDLVVGSFLLILIFDPQWLFGTITLPIAVWIVVMTPLLHRVVNIIGYYIGVKEVPW</sequence>
<feature type="chain" id="PRO_0000298278" description="CDP-archaeol synthase">
    <location>
        <begin position="1"/>
        <end position="166"/>
    </location>
</feature>
<feature type="transmembrane region" description="Helical" evidence="1">
    <location>
        <begin position="42"/>
        <end position="62"/>
    </location>
</feature>
<feature type="transmembrane region" description="Helical" evidence="1">
    <location>
        <begin position="73"/>
        <end position="93"/>
    </location>
</feature>
<feature type="transmembrane region" description="Helical" evidence="1">
    <location>
        <begin position="104"/>
        <end position="124"/>
    </location>
</feature>
<feature type="transmembrane region" description="Helical" evidence="1">
    <location>
        <begin position="128"/>
        <end position="148"/>
    </location>
</feature>
<proteinExistence type="inferred from homology"/>
<gene>
    <name evidence="1" type="primary">carS</name>
    <name type="ordered locus">Memar_1002</name>
</gene>
<protein>
    <recommendedName>
        <fullName evidence="1">CDP-archaeol synthase</fullName>
        <ecNumber evidence="1">2.7.7.67</ecNumber>
    </recommendedName>
    <alternativeName>
        <fullName evidence="1">CDP-2,3-bis-(O-geranylgeranyl)-sn-glycerol synthase</fullName>
    </alternativeName>
</protein>
<name>CDPAS_METMJ</name>
<keyword id="KW-1003">Cell membrane</keyword>
<keyword id="KW-0444">Lipid biosynthesis</keyword>
<keyword id="KW-0443">Lipid metabolism</keyword>
<keyword id="KW-0460">Magnesium</keyword>
<keyword id="KW-0472">Membrane</keyword>
<keyword id="KW-0594">Phospholipid biosynthesis</keyword>
<keyword id="KW-1208">Phospholipid metabolism</keyword>
<keyword id="KW-0808">Transferase</keyword>
<keyword id="KW-0812">Transmembrane</keyword>
<keyword id="KW-1133">Transmembrane helix</keyword>
<dbReference type="EC" id="2.7.7.67" evidence="1"/>
<dbReference type="EMBL" id="CP000562">
    <property type="protein sequence ID" value="ABN56935.1"/>
    <property type="molecule type" value="Genomic_DNA"/>
</dbReference>
<dbReference type="RefSeq" id="WP_011843846.1">
    <property type="nucleotide sequence ID" value="NC_009051.1"/>
</dbReference>
<dbReference type="SMR" id="A3CU85"/>
<dbReference type="STRING" id="368407.Memar_1002"/>
<dbReference type="GeneID" id="4847658"/>
<dbReference type="KEGG" id="mem:Memar_1002"/>
<dbReference type="eggNOG" id="arCOG04106">
    <property type="taxonomic scope" value="Archaea"/>
</dbReference>
<dbReference type="HOGENOM" id="CLU_105710_0_0_2"/>
<dbReference type="UniPathway" id="UPA00940"/>
<dbReference type="Proteomes" id="UP000002146">
    <property type="component" value="Chromosome"/>
</dbReference>
<dbReference type="GO" id="GO:0005886">
    <property type="term" value="C:plasma membrane"/>
    <property type="evidence" value="ECO:0007669"/>
    <property type="project" value="UniProtKB-SubCell"/>
</dbReference>
<dbReference type="GO" id="GO:0043338">
    <property type="term" value="F:CDP-2,3-bis-(O-geranylgeranyl)-sn-glycerol synthase activity"/>
    <property type="evidence" value="ECO:0007669"/>
    <property type="project" value="UniProtKB-EC"/>
</dbReference>
<dbReference type="GO" id="GO:0046474">
    <property type="term" value="P:glycerophospholipid biosynthetic process"/>
    <property type="evidence" value="ECO:0007669"/>
    <property type="project" value="UniProtKB-UniRule"/>
</dbReference>
<dbReference type="HAMAP" id="MF_01117">
    <property type="entry name" value="CDP_archaeol_synth"/>
    <property type="match status" value="1"/>
</dbReference>
<dbReference type="InterPro" id="IPR032690">
    <property type="entry name" value="CarS"/>
</dbReference>
<dbReference type="InterPro" id="IPR002726">
    <property type="entry name" value="CarS_archaea"/>
</dbReference>
<dbReference type="NCBIfam" id="NF003114">
    <property type="entry name" value="PRK04032.1"/>
    <property type="match status" value="1"/>
</dbReference>
<dbReference type="PANTHER" id="PTHR39650">
    <property type="entry name" value="CDP-ARCHAEOL SYNTHASE"/>
    <property type="match status" value="1"/>
</dbReference>
<dbReference type="PANTHER" id="PTHR39650:SF1">
    <property type="entry name" value="CDP-ARCHAEOL SYNTHASE"/>
    <property type="match status" value="1"/>
</dbReference>
<dbReference type="Pfam" id="PF01864">
    <property type="entry name" value="CarS-like"/>
    <property type="match status" value="1"/>
</dbReference>
<evidence type="ECO:0000255" key="1">
    <source>
        <dbReference type="HAMAP-Rule" id="MF_01117"/>
    </source>
</evidence>
<comment type="function">
    <text evidence="1">Catalyzes the formation of CDP-2,3-bis-(O-geranylgeranyl)-sn-glycerol (CDP-archaeol) from 2,3-bis-(O-geranylgeranyl)-sn-glycerol 1-phosphate (DGGGP) and CTP. This reaction is the third ether-bond-formation step in the biosynthesis of archaeal membrane lipids.</text>
</comment>
<comment type="catalytic activity">
    <reaction evidence="1">
        <text>2,3-bis-O-(geranylgeranyl)-sn-glycerol 1-phosphate + CTP + H(+) = CDP-2,3-bis-O-(geranylgeranyl)-sn-glycerol + diphosphate</text>
        <dbReference type="Rhea" id="RHEA:25690"/>
        <dbReference type="ChEBI" id="CHEBI:15378"/>
        <dbReference type="ChEBI" id="CHEBI:33019"/>
        <dbReference type="ChEBI" id="CHEBI:37563"/>
        <dbReference type="ChEBI" id="CHEBI:58837"/>
        <dbReference type="ChEBI" id="CHEBI:58838"/>
        <dbReference type="EC" id="2.7.7.67"/>
    </reaction>
</comment>
<comment type="cofactor">
    <cofactor evidence="1">
        <name>Mg(2+)</name>
        <dbReference type="ChEBI" id="CHEBI:18420"/>
    </cofactor>
</comment>
<comment type="pathway">
    <text evidence="1">Membrane lipid metabolism; glycerophospholipid metabolism.</text>
</comment>
<comment type="subcellular location">
    <subcellularLocation>
        <location evidence="1">Cell membrane</location>
        <topology evidence="1">Multi-pass membrane protein</topology>
    </subcellularLocation>
</comment>
<comment type="similarity">
    <text evidence="1">Belongs to the CDP-archaeol synthase family.</text>
</comment>
<reference key="1">
    <citation type="journal article" date="2009" name="Stand. Genomic Sci.">
        <title>Complete genome sequence of Methanoculleus marisnigri Romesser et al. 1981 type strain JR1.</title>
        <authorList>
            <person name="Anderson I.J."/>
            <person name="Sieprawska-Lupa M."/>
            <person name="Lapidus A."/>
            <person name="Nolan M."/>
            <person name="Copeland A."/>
            <person name="Glavina Del Rio T."/>
            <person name="Tice H."/>
            <person name="Dalin E."/>
            <person name="Barry K."/>
            <person name="Saunders E."/>
            <person name="Han C."/>
            <person name="Brettin T."/>
            <person name="Detter J.C."/>
            <person name="Bruce D."/>
            <person name="Mikhailova N."/>
            <person name="Pitluck S."/>
            <person name="Hauser L."/>
            <person name="Land M."/>
            <person name="Lucas S."/>
            <person name="Richardson P."/>
            <person name="Whitman W.B."/>
            <person name="Kyrpides N.C."/>
        </authorList>
    </citation>
    <scope>NUCLEOTIDE SEQUENCE [LARGE SCALE GENOMIC DNA]</scope>
    <source>
        <strain>ATCC 35101 / DSM 1498 / JR1</strain>
    </source>
</reference>